<proteinExistence type="inferred from homology"/>
<sequence length="246" mass="28189">MKKLVLVRHGQSQWNLENLFTGWTDVDLTEQGQKEAATAAQLLQKEGIFFQTAFTSYLKRAIKTLNIILDVMDLDWIDVHKTWRLNEKHYGALQGLNKKETAAQYGQEQVLLWRRSFDTAPAALEYSDARAPHNDRRYQRVARQDLPLTESLKDTIARIMPYWEVVIKPVLIAENTVLIVAHGNSLRAIIKHLKGISETEITDLNLPTGIPYVFEFDDDMNLCADYFLGDTEAIKKLQESVAKQSQ</sequence>
<comment type="function">
    <text evidence="1">Catalyzes the interconversion of 2-phosphoglycerate and 3-phosphoglycerate.</text>
</comment>
<comment type="catalytic activity">
    <reaction evidence="1">
        <text>(2R)-2-phosphoglycerate = (2R)-3-phosphoglycerate</text>
        <dbReference type="Rhea" id="RHEA:15901"/>
        <dbReference type="ChEBI" id="CHEBI:58272"/>
        <dbReference type="ChEBI" id="CHEBI:58289"/>
        <dbReference type="EC" id="5.4.2.11"/>
    </reaction>
</comment>
<comment type="pathway">
    <text evidence="1">Carbohydrate degradation; glycolysis; pyruvate from D-glyceraldehyde 3-phosphate: step 3/5.</text>
</comment>
<comment type="subunit">
    <text evidence="1">Homodimer.</text>
</comment>
<comment type="similarity">
    <text evidence="1">Belongs to the phosphoglycerate mutase family. BPG-dependent PGAM subfamily.</text>
</comment>
<feature type="chain" id="PRO_1000064053" description="2,3-bisphosphoglycerate-dependent phosphoglycerate mutase">
    <location>
        <begin position="1"/>
        <end position="246"/>
    </location>
</feature>
<feature type="active site" description="Tele-phosphohistidine intermediate" evidence="1">
    <location>
        <position position="9"/>
    </location>
</feature>
<feature type="active site" description="Proton donor/acceptor" evidence="1">
    <location>
        <position position="87"/>
    </location>
</feature>
<feature type="binding site" evidence="1">
    <location>
        <begin position="8"/>
        <end position="15"/>
    </location>
    <ligand>
        <name>substrate</name>
    </ligand>
</feature>
<feature type="binding site" evidence="1">
    <location>
        <begin position="21"/>
        <end position="22"/>
    </location>
    <ligand>
        <name>substrate</name>
    </ligand>
</feature>
<feature type="binding site" evidence="1">
    <location>
        <position position="60"/>
    </location>
    <ligand>
        <name>substrate</name>
    </ligand>
</feature>
<feature type="binding site" evidence="1">
    <location>
        <begin position="87"/>
        <end position="90"/>
    </location>
    <ligand>
        <name>substrate</name>
    </ligand>
</feature>
<feature type="binding site" evidence="1">
    <location>
        <position position="98"/>
    </location>
    <ligand>
        <name>substrate</name>
    </ligand>
</feature>
<feature type="binding site" evidence="1">
    <location>
        <begin position="114"/>
        <end position="115"/>
    </location>
    <ligand>
        <name>substrate</name>
    </ligand>
</feature>
<feature type="binding site" evidence="1">
    <location>
        <begin position="183"/>
        <end position="184"/>
    </location>
    <ligand>
        <name>substrate</name>
    </ligand>
</feature>
<feature type="site" description="Transition state stabilizer" evidence="1">
    <location>
        <position position="182"/>
    </location>
</feature>
<reference key="1">
    <citation type="journal article" date="2007" name="Nat. Biotechnol.">
        <title>Genome sequence and identification of candidate vaccine antigens from the animal pathogen Dichelobacter nodosus.</title>
        <authorList>
            <person name="Myers G.S.A."/>
            <person name="Parker D."/>
            <person name="Al-Hasani K."/>
            <person name="Kennan R.M."/>
            <person name="Seemann T."/>
            <person name="Ren Q."/>
            <person name="Badger J.H."/>
            <person name="Selengut J.D."/>
            <person name="Deboy R.T."/>
            <person name="Tettelin H."/>
            <person name="Boyce J.D."/>
            <person name="McCarl V.P."/>
            <person name="Han X."/>
            <person name="Nelson W.C."/>
            <person name="Madupu R."/>
            <person name="Mohamoud Y."/>
            <person name="Holley T."/>
            <person name="Fedorova N."/>
            <person name="Khouri H."/>
            <person name="Bottomley S.P."/>
            <person name="Whittington R.J."/>
            <person name="Adler B."/>
            <person name="Songer J.G."/>
            <person name="Rood J.I."/>
            <person name="Paulsen I.T."/>
        </authorList>
    </citation>
    <scope>NUCLEOTIDE SEQUENCE [LARGE SCALE GENOMIC DNA]</scope>
    <source>
        <strain>VCS1703A</strain>
    </source>
</reference>
<evidence type="ECO:0000255" key="1">
    <source>
        <dbReference type="HAMAP-Rule" id="MF_01039"/>
    </source>
</evidence>
<keyword id="KW-0312">Gluconeogenesis</keyword>
<keyword id="KW-0324">Glycolysis</keyword>
<keyword id="KW-0413">Isomerase</keyword>
<keyword id="KW-1185">Reference proteome</keyword>
<dbReference type="EC" id="5.4.2.11" evidence="1"/>
<dbReference type="EMBL" id="CP000513">
    <property type="protein sequence ID" value="ABQ13209.1"/>
    <property type="molecule type" value="Genomic_DNA"/>
</dbReference>
<dbReference type="RefSeq" id="WP_012031039.1">
    <property type="nucleotide sequence ID" value="NC_009446.1"/>
</dbReference>
<dbReference type="SMR" id="A5EV29"/>
<dbReference type="STRING" id="246195.DNO_0706"/>
<dbReference type="KEGG" id="dno:DNO_0706"/>
<dbReference type="eggNOG" id="COG0588">
    <property type="taxonomic scope" value="Bacteria"/>
</dbReference>
<dbReference type="HOGENOM" id="CLU_033323_1_1_6"/>
<dbReference type="OrthoDB" id="9781415at2"/>
<dbReference type="UniPathway" id="UPA00109">
    <property type="reaction ID" value="UER00186"/>
</dbReference>
<dbReference type="Proteomes" id="UP000000248">
    <property type="component" value="Chromosome"/>
</dbReference>
<dbReference type="GO" id="GO:0004619">
    <property type="term" value="F:phosphoglycerate mutase activity"/>
    <property type="evidence" value="ECO:0007669"/>
    <property type="project" value="UniProtKB-EC"/>
</dbReference>
<dbReference type="GO" id="GO:0006094">
    <property type="term" value="P:gluconeogenesis"/>
    <property type="evidence" value="ECO:0007669"/>
    <property type="project" value="UniProtKB-UniRule"/>
</dbReference>
<dbReference type="GO" id="GO:0006096">
    <property type="term" value="P:glycolytic process"/>
    <property type="evidence" value="ECO:0007669"/>
    <property type="project" value="UniProtKB-UniRule"/>
</dbReference>
<dbReference type="CDD" id="cd07067">
    <property type="entry name" value="HP_PGM_like"/>
    <property type="match status" value="1"/>
</dbReference>
<dbReference type="FunFam" id="3.40.50.1240:FF:000003">
    <property type="entry name" value="2,3-bisphosphoglycerate-dependent phosphoglycerate mutase"/>
    <property type="match status" value="1"/>
</dbReference>
<dbReference type="Gene3D" id="3.40.50.1240">
    <property type="entry name" value="Phosphoglycerate mutase-like"/>
    <property type="match status" value="1"/>
</dbReference>
<dbReference type="HAMAP" id="MF_01039">
    <property type="entry name" value="PGAM_GpmA"/>
    <property type="match status" value="1"/>
</dbReference>
<dbReference type="InterPro" id="IPR013078">
    <property type="entry name" value="His_Pase_superF_clade-1"/>
</dbReference>
<dbReference type="InterPro" id="IPR029033">
    <property type="entry name" value="His_PPase_superfam"/>
</dbReference>
<dbReference type="InterPro" id="IPR001345">
    <property type="entry name" value="PG/BPGM_mutase_AS"/>
</dbReference>
<dbReference type="InterPro" id="IPR005952">
    <property type="entry name" value="Phosphogly_mut1"/>
</dbReference>
<dbReference type="NCBIfam" id="TIGR01258">
    <property type="entry name" value="pgm_1"/>
    <property type="match status" value="1"/>
</dbReference>
<dbReference type="NCBIfam" id="NF010713">
    <property type="entry name" value="PRK14115.1"/>
    <property type="match status" value="1"/>
</dbReference>
<dbReference type="PANTHER" id="PTHR11931">
    <property type="entry name" value="PHOSPHOGLYCERATE MUTASE"/>
    <property type="match status" value="1"/>
</dbReference>
<dbReference type="Pfam" id="PF00300">
    <property type="entry name" value="His_Phos_1"/>
    <property type="match status" value="2"/>
</dbReference>
<dbReference type="PIRSF" id="PIRSF000709">
    <property type="entry name" value="6PFK_2-Ptase"/>
    <property type="match status" value="1"/>
</dbReference>
<dbReference type="SMART" id="SM00855">
    <property type="entry name" value="PGAM"/>
    <property type="match status" value="1"/>
</dbReference>
<dbReference type="SUPFAM" id="SSF53254">
    <property type="entry name" value="Phosphoglycerate mutase-like"/>
    <property type="match status" value="1"/>
</dbReference>
<dbReference type="PROSITE" id="PS00175">
    <property type="entry name" value="PG_MUTASE"/>
    <property type="match status" value="1"/>
</dbReference>
<accession>A5EV29</accession>
<protein>
    <recommendedName>
        <fullName evidence="1">2,3-bisphosphoglycerate-dependent phosphoglycerate mutase</fullName>
        <shortName evidence="1">BPG-dependent PGAM</shortName>
        <shortName evidence="1">PGAM</shortName>
        <shortName evidence="1">Phosphoglyceromutase</shortName>
        <shortName evidence="1">dPGM</shortName>
        <ecNumber evidence="1">5.4.2.11</ecNumber>
    </recommendedName>
</protein>
<organism>
    <name type="scientific">Dichelobacter nodosus (strain VCS1703A)</name>
    <dbReference type="NCBI Taxonomy" id="246195"/>
    <lineage>
        <taxon>Bacteria</taxon>
        <taxon>Pseudomonadati</taxon>
        <taxon>Pseudomonadota</taxon>
        <taxon>Gammaproteobacteria</taxon>
        <taxon>Cardiobacteriales</taxon>
        <taxon>Cardiobacteriaceae</taxon>
        <taxon>Dichelobacter</taxon>
    </lineage>
</organism>
<gene>
    <name evidence="1" type="primary">gpmA</name>
    <name type="ordered locus">DNO_0706</name>
</gene>
<name>GPMA_DICNV</name>